<accession>Q91653</accession>
<accession>A1L2Q7</accession>
<proteinExistence type="evidence at transcript level"/>
<comment type="function">
    <text evidence="1">Binds CRF and inactivates it. May prevent inappropriate pituitary-adrenal stimulation in pregnancy (By similarity).</text>
</comment>
<comment type="subcellular location">
    <subcellularLocation>
        <location evidence="1">Secreted</location>
    </subcellularLocation>
</comment>
<comment type="similarity">
    <text evidence="3">Belongs to the CRF-binding protein family.</text>
</comment>
<organism>
    <name type="scientific">Xenopus laevis</name>
    <name type="common">African clawed frog</name>
    <dbReference type="NCBI Taxonomy" id="8355"/>
    <lineage>
        <taxon>Eukaryota</taxon>
        <taxon>Metazoa</taxon>
        <taxon>Chordata</taxon>
        <taxon>Craniata</taxon>
        <taxon>Vertebrata</taxon>
        <taxon>Euteleostomi</taxon>
        <taxon>Amphibia</taxon>
        <taxon>Batrachia</taxon>
        <taxon>Anura</taxon>
        <taxon>Pipoidea</taxon>
        <taxon>Pipidae</taxon>
        <taxon>Xenopodinae</taxon>
        <taxon>Xenopus</taxon>
        <taxon>Xenopus</taxon>
    </lineage>
</organism>
<name>CRHBP_XENLA</name>
<gene>
    <name type="primary">crhbp</name>
    <name type="synonym">e</name>
</gene>
<reference key="1">
    <citation type="journal article" date="1996" name="Proc. Natl. Acad. Sci. U.S.A.">
        <title>The thyroid hormone-induced tail resorption program during Xenopus laevis metamorphosis.</title>
        <authorList>
            <person name="Brown D.D."/>
            <person name="Wang Z."/>
            <person name="Furlow J.D."/>
            <person name="Kanamori A."/>
            <person name="Schwartzman R.A."/>
            <person name="Remo B.F."/>
            <person name="Pinder A."/>
        </authorList>
    </citation>
    <scope>NUCLEOTIDE SEQUENCE [MRNA]</scope>
</reference>
<reference key="2">
    <citation type="submission" date="2006-12" db="EMBL/GenBank/DDBJ databases">
        <authorList>
            <consortium name="NIH - Xenopus Gene Collection (XGC) project"/>
        </authorList>
    </citation>
    <scope>NUCLEOTIDE SEQUENCE [LARGE SCALE MRNA]</scope>
    <source>
        <tissue>Olfactory bulb</tissue>
    </source>
</reference>
<dbReference type="EMBL" id="U41858">
    <property type="protein sequence ID" value="AAC59874.1"/>
    <property type="molecule type" value="mRNA"/>
</dbReference>
<dbReference type="EMBL" id="BC129661">
    <property type="protein sequence ID" value="AAI29662.1"/>
    <property type="molecule type" value="mRNA"/>
</dbReference>
<dbReference type="RefSeq" id="NP_001079273.1">
    <property type="nucleotide sequence ID" value="NM_001085804.1"/>
</dbReference>
<dbReference type="GlyCosmos" id="Q91653">
    <property type="glycosylation" value="1 site, No reported glycans"/>
</dbReference>
<dbReference type="GeneID" id="378555"/>
<dbReference type="KEGG" id="xla:378555"/>
<dbReference type="AGR" id="Xenbase:XB-GENE-865598"/>
<dbReference type="CTD" id="378555"/>
<dbReference type="Xenbase" id="XB-GENE-865598">
    <property type="gene designation" value="crhbp.S"/>
</dbReference>
<dbReference type="OMA" id="VKKLHNP"/>
<dbReference type="OrthoDB" id="10056927at2759"/>
<dbReference type="Proteomes" id="UP000186698">
    <property type="component" value="Chromosome 1S"/>
</dbReference>
<dbReference type="Bgee" id="378555">
    <property type="expression patterns" value="Expressed in internal ear and 2 other cell types or tissues"/>
</dbReference>
<dbReference type="GO" id="GO:0005615">
    <property type="term" value="C:extracellular space"/>
    <property type="evidence" value="ECO:0000318"/>
    <property type="project" value="GO_Central"/>
</dbReference>
<dbReference type="GO" id="GO:0051424">
    <property type="term" value="F:corticotropin-releasing hormone binding"/>
    <property type="evidence" value="ECO:0000318"/>
    <property type="project" value="GO_Central"/>
</dbReference>
<dbReference type="GO" id="GO:0009755">
    <property type="term" value="P:hormone-mediated signaling pathway"/>
    <property type="evidence" value="ECO:0000318"/>
    <property type="project" value="GO_Central"/>
</dbReference>
<dbReference type="GO" id="GO:0051460">
    <property type="term" value="P:negative regulation of corticotropin secretion"/>
    <property type="evidence" value="ECO:0000318"/>
    <property type="project" value="GO_Central"/>
</dbReference>
<dbReference type="InterPro" id="IPR008435">
    <property type="entry name" value="CRF-bd"/>
</dbReference>
<dbReference type="InterPro" id="IPR056178">
    <property type="entry name" value="CRF-BP_C"/>
</dbReference>
<dbReference type="InterPro" id="IPR056177">
    <property type="entry name" value="CRF-BP_N"/>
</dbReference>
<dbReference type="InterPro" id="IPR035914">
    <property type="entry name" value="Sperma_CUB_dom_sf"/>
</dbReference>
<dbReference type="PANTHER" id="PTHR10278">
    <property type="entry name" value="CORTICOTROPIN-RELEASING FACTOR-BINDING PROTEIN"/>
    <property type="match status" value="1"/>
</dbReference>
<dbReference type="PANTHER" id="PTHR10278:SF0">
    <property type="entry name" value="CORTICOTROPIN-RELEASING FACTOR-BINDING PROTEIN"/>
    <property type="match status" value="1"/>
</dbReference>
<dbReference type="Pfam" id="PF23541">
    <property type="entry name" value="CRF-BP_C"/>
    <property type="match status" value="1"/>
</dbReference>
<dbReference type="Pfam" id="PF05428">
    <property type="entry name" value="CRF-BP_N"/>
    <property type="match status" value="1"/>
</dbReference>
<dbReference type="PIRSF" id="PIRSF009279">
    <property type="entry name" value="CRF_bd"/>
    <property type="match status" value="1"/>
</dbReference>
<dbReference type="SUPFAM" id="SSF49854">
    <property type="entry name" value="Spermadhesin, CUB domain"/>
    <property type="match status" value="1"/>
</dbReference>
<protein>
    <recommendedName>
        <fullName>Corticotropin-releasing factor-binding protein</fullName>
        <shortName>CRF-BP</shortName>
        <shortName>CRF-binding protein</shortName>
    </recommendedName>
    <alternativeName>
        <fullName>Corticotropin-releasing hormone-binding protein</fullName>
        <shortName>CRH-BP</shortName>
    </alternativeName>
</protein>
<keyword id="KW-1015">Disulfide bond</keyword>
<keyword id="KW-0325">Glycoprotein</keyword>
<keyword id="KW-1185">Reference proteome</keyword>
<keyword id="KW-0964">Secreted</keyword>
<keyword id="KW-0732">Signal</keyword>
<evidence type="ECO:0000250" key="1"/>
<evidence type="ECO:0000255" key="2"/>
<evidence type="ECO:0000305" key="3"/>
<feature type="signal peptide" evidence="2">
    <location>
        <begin position="1"/>
        <end position="21"/>
    </location>
</feature>
<feature type="chain" id="PRO_0000020998" description="Corticotropin-releasing factor-binding protein">
    <location>
        <begin position="22"/>
        <end position="321"/>
    </location>
</feature>
<feature type="glycosylation site" description="N-linked (GlcNAc...) asparagine" evidence="2">
    <location>
        <position position="203"/>
    </location>
</feature>
<feature type="disulfide bond" evidence="1">
    <location>
        <begin position="59"/>
        <end position="80"/>
    </location>
</feature>
<feature type="disulfide bond" evidence="1">
    <location>
        <begin position="103"/>
        <end position="140"/>
    </location>
</feature>
<feature type="disulfide bond" evidence="1">
    <location>
        <begin position="182"/>
        <end position="204"/>
    </location>
</feature>
<feature type="disulfide bond" evidence="1">
    <location>
        <begin position="237"/>
        <end position="264"/>
    </location>
</feature>
<feature type="disulfide bond" evidence="1">
    <location>
        <begin position="277"/>
        <end position="317"/>
    </location>
</feature>
<sequence>MTPASRPDWCLILLFLAVLRGESRYIQMREAAEDALFLLNSDFKRELSEGQIYRRSLRCIDMLSIEGQFTFQADRPQLHCALFLIGEPEEFIIIEYNFVNIDCIGGDILKVFDGWIIKGEKFPSSLDHPLSTMERYTDICEDGDVGSITRSSQNVAMIFFRVQQPGHGFTLTIRKIPNLFPCNVISQSMNGRFTMITPHQHRNCSFSIIYPVVIKIFDLTLGHFNELQLKKPPPKGCGDAGDFVELLGGAGLDPSKMFPLADLCHSFHGSAQMKIGCDNTVVRMVSSGNFINRVTFEYNQLDRQLEKKQGNSVEEACFPSD</sequence>